<keyword id="KW-0067">ATP-binding</keyword>
<keyword id="KW-0963">Cytoplasm</keyword>
<keyword id="KW-0329">Glyoxylate bypass</keyword>
<keyword id="KW-0378">Hydrolase</keyword>
<keyword id="KW-0418">Kinase</keyword>
<keyword id="KW-0547">Nucleotide-binding</keyword>
<keyword id="KW-0904">Protein phosphatase</keyword>
<keyword id="KW-0723">Serine/threonine-protein kinase</keyword>
<keyword id="KW-0808">Transferase</keyword>
<keyword id="KW-0816">Tricarboxylic acid cycle</keyword>
<comment type="function">
    <text evidence="1">Bifunctional enzyme which can phosphorylate or dephosphorylate isocitrate dehydrogenase (IDH) on a specific serine residue. This is a regulatory mechanism which enables bacteria to bypass the Krebs cycle via the glyoxylate shunt in response to the source of carbon. When bacteria are grown on glucose, IDH is fully active and unphosphorylated, but when grown on acetate or ethanol, the activity of IDH declines drastically concomitant with its phosphorylation.</text>
</comment>
<comment type="catalytic activity">
    <reaction evidence="1">
        <text>L-seryl-[isocitrate dehydrogenase] + ATP = O-phospho-L-seryl-[isocitrate dehydrogenase] + ADP + H(+)</text>
        <dbReference type="Rhea" id="RHEA:43540"/>
        <dbReference type="Rhea" id="RHEA-COMP:10605"/>
        <dbReference type="Rhea" id="RHEA-COMP:10606"/>
        <dbReference type="ChEBI" id="CHEBI:15378"/>
        <dbReference type="ChEBI" id="CHEBI:29999"/>
        <dbReference type="ChEBI" id="CHEBI:30616"/>
        <dbReference type="ChEBI" id="CHEBI:83421"/>
        <dbReference type="ChEBI" id="CHEBI:456216"/>
        <dbReference type="EC" id="2.7.11.5"/>
    </reaction>
</comment>
<comment type="subcellular location">
    <subcellularLocation>
        <location evidence="1">Cytoplasm</location>
    </subcellularLocation>
</comment>
<comment type="similarity">
    <text evidence="1">Belongs to the AceK family.</text>
</comment>
<feature type="chain" id="PRO_0000288295" description="Isocitrate dehydrogenase kinase/phosphatase">
    <location>
        <begin position="1"/>
        <end position="577"/>
    </location>
</feature>
<feature type="active site" evidence="1">
    <location>
        <position position="374"/>
    </location>
</feature>
<feature type="binding site" evidence="1">
    <location>
        <begin position="318"/>
        <end position="324"/>
    </location>
    <ligand>
        <name>ATP</name>
        <dbReference type="ChEBI" id="CHEBI:30616"/>
    </ligand>
</feature>
<feature type="binding site" evidence="1">
    <location>
        <position position="339"/>
    </location>
    <ligand>
        <name>ATP</name>
        <dbReference type="ChEBI" id="CHEBI:30616"/>
    </ligand>
</feature>
<dbReference type="EC" id="2.7.11.5" evidence="1"/>
<dbReference type="EC" id="3.1.3.-" evidence="1"/>
<dbReference type="EMBL" id="CP000438">
    <property type="protein sequence ID" value="ABJ10571.1"/>
    <property type="molecule type" value="Genomic_DNA"/>
</dbReference>
<dbReference type="RefSeq" id="WP_003140319.1">
    <property type="nucleotide sequence ID" value="NZ_CP034244.1"/>
</dbReference>
<dbReference type="SMR" id="Q02JM4"/>
<dbReference type="KEGG" id="pau:PA14_46450"/>
<dbReference type="PseudoCAP" id="PA14_46450"/>
<dbReference type="HOGENOM" id="CLU_033804_1_1_6"/>
<dbReference type="BioCyc" id="PAER208963:G1G74-3895-MONOMER"/>
<dbReference type="Proteomes" id="UP000000653">
    <property type="component" value="Chromosome"/>
</dbReference>
<dbReference type="GO" id="GO:0005737">
    <property type="term" value="C:cytoplasm"/>
    <property type="evidence" value="ECO:0007669"/>
    <property type="project" value="UniProtKB-SubCell"/>
</dbReference>
<dbReference type="GO" id="GO:0008772">
    <property type="term" value="F:[isocitrate dehydrogenase (NADP+)] kinase activity"/>
    <property type="evidence" value="ECO:0007669"/>
    <property type="project" value="UniProtKB-UniRule"/>
</dbReference>
<dbReference type="GO" id="GO:0016208">
    <property type="term" value="F:AMP binding"/>
    <property type="evidence" value="ECO:0007669"/>
    <property type="project" value="TreeGrafter"/>
</dbReference>
<dbReference type="GO" id="GO:0005524">
    <property type="term" value="F:ATP binding"/>
    <property type="evidence" value="ECO:0007669"/>
    <property type="project" value="UniProtKB-UniRule"/>
</dbReference>
<dbReference type="GO" id="GO:0004721">
    <property type="term" value="F:phosphoprotein phosphatase activity"/>
    <property type="evidence" value="ECO:0007669"/>
    <property type="project" value="UniProtKB-KW"/>
</dbReference>
<dbReference type="GO" id="GO:0004674">
    <property type="term" value="F:protein serine/threonine kinase activity"/>
    <property type="evidence" value="ECO:0007669"/>
    <property type="project" value="UniProtKB-KW"/>
</dbReference>
<dbReference type="GO" id="GO:0006006">
    <property type="term" value="P:glucose metabolic process"/>
    <property type="evidence" value="ECO:0007669"/>
    <property type="project" value="InterPro"/>
</dbReference>
<dbReference type="GO" id="GO:0006097">
    <property type="term" value="P:glyoxylate cycle"/>
    <property type="evidence" value="ECO:0007669"/>
    <property type="project" value="UniProtKB-UniRule"/>
</dbReference>
<dbReference type="GO" id="GO:0006099">
    <property type="term" value="P:tricarboxylic acid cycle"/>
    <property type="evidence" value="ECO:0007669"/>
    <property type="project" value="UniProtKB-UniRule"/>
</dbReference>
<dbReference type="HAMAP" id="MF_00747">
    <property type="entry name" value="AceK"/>
    <property type="match status" value="1"/>
</dbReference>
<dbReference type="InterPro" id="IPR046855">
    <property type="entry name" value="AceK_kinase"/>
</dbReference>
<dbReference type="InterPro" id="IPR046854">
    <property type="entry name" value="AceK_regulatory"/>
</dbReference>
<dbReference type="InterPro" id="IPR010452">
    <property type="entry name" value="Isocitrate_DH_AceK"/>
</dbReference>
<dbReference type="NCBIfam" id="NF002804">
    <property type="entry name" value="PRK02946.1"/>
    <property type="match status" value="1"/>
</dbReference>
<dbReference type="PANTHER" id="PTHR39559">
    <property type="match status" value="1"/>
</dbReference>
<dbReference type="PANTHER" id="PTHR39559:SF1">
    <property type="entry name" value="ISOCITRATE DEHYDROGENASE KINASE_PHOSPHATASE"/>
    <property type="match status" value="1"/>
</dbReference>
<dbReference type="Pfam" id="PF06315">
    <property type="entry name" value="AceK_kinase"/>
    <property type="match status" value="1"/>
</dbReference>
<dbReference type="Pfam" id="PF20423">
    <property type="entry name" value="AceK_regulatory"/>
    <property type="match status" value="1"/>
</dbReference>
<dbReference type="PIRSF" id="PIRSF000719">
    <property type="entry name" value="AceK"/>
    <property type="match status" value="1"/>
</dbReference>
<evidence type="ECO:0000255" key="1">
    <source>
        <dbReference type="HAMAP-Rule" id="MF_00747"/>
    </source>
</evidence>
<reference key="1">
    <citation type="journal article" date="2006" name="Genome Biol.">
        <title>Genomic analysis reveals that Pseudomonas aeruginosa virulence is combinatorial.</title>
        <authorList>
            <person name="Lee D.G."/>
            <person name="Urbach J.M."/>
            <person name="Wu G."/>
            <person name="Liberati N.T."/>
            <person name="Feinbaum R.L."/>
            <person name="Miyata S."/>
            <person name="Diggins L.T."/>
            <person name="He J."/>
            <person name="Saucier M."/>
            <person name="Deziel E."/>
            <person name="Friedman L."/>
            <person name="Li L."/>
            <person name="Grills G."/>
            <person name="Montgomery K."/>
            <person name="Kucherlapati R."/>
            <person name="Rahme L.G."/>
            <person name="Ausubel F.M."/>
        </authorList>
    </citation>
    <scope>NUCLEOTIDE SEQUENCE [LARGE SCALE GENOMIC DNA]</scope>
    <source>
        <strain>UCBPP-PA14</strain>
    </source>
</reference>
<sequence>MVQSAPASEIAALILRGFDDYREQFREITDGARARFEQAQWQEAQRASTQRINLYEEKVAETVAGLRVGLADSELLDVERWPIIKSAYIAQIDLRLDDELAETWFNSIFCGLFSHDNISDGTMFVHTTRPSLRAHARAPYTRTYRPGGDLRQALEKIFDDYRFDVPYDDRERDLERIDALLHSNLPDWVCKDPDLAIELIGSVFYRNKGAYLVGRLFTPDEQWPLVFPLLHREGHGIQFDTVITDEAEVSIIFSFTRSYFMVDVPVPAELVAFLKRLLPGKHLAELYTSIGFYKQGKSEFYRALINHLATTDDRFVMAPGVRGMVMSVFTLPGFNTVFKIIKDRFNPSKSVDHATVIQKYQLVKNHDRVGRLADTQQFADFRFPVSKFEPECLAELLEVAPSTVVMEGDVVLIRHCWTERRMTPLNIYLENASEAQTREALNDYGLAIKQLAAANIFPGDMLLKNFGVTRHGRVVFYDYDEICYLTEVNFRYIPEPRFPEDEMSSEPWYSVGPNDVFPEEFPRFLFVDLNQRRLFAKLHGNLYDAKYWQGLQEQIREGKVIDVFPYRRQETPEQLLG</sequence>
<gene>
    <name evidence="1" type="primary">aceK</name>
    <name type="ordered locus">PA14_46450</name>
</gene>
<proteinExistence type="inferred from homology"/>
<protein>
    <recommendedName>
        <fullName evidence="1">Isocitrate dehydrogenase kinase/phosphatase</fullName>
        <shortName evidence="1">IDH kinase/phosphatase</shortName>
        <shortName evidence="1">IDHK/P</shortName>
        <ecNumber evidence="1">2.7.11.5</ecNumber>
        <ecNumber evidence="1">3.1.3.-</ecNumber>
    </recommendedName>
</protein>
<name>ACEK_PSEAB</name>
<accession>Q02JM4</accession>
<organism>
    <name type="scientific">Pseudomonas aeruginosa (strain UCBPP-PA14)</name>
    <dbReference type="NCBI Taxonomy" id="208963"/>
    <lineage>
        <taxon>Bacteria</taxon>
        <taxon>Pseudomonadati</taxon>
        <taxon>Pseudomonadota</taxon>
        <taxon>Gammaproteobacteria</taxon>
        <taxon>Pseudomonadales</taxon>
        <taxon>Pseudomonadaceae</taxon>
        <taxon>Pseudomonas</taxon>
    </lineage>
</organism>